<protein>
    <recommendedName>
        <fullName>Inositol 4-methyltransferase</fullName>
        <ecNumber>2.1.1.129</ecNumber>
    </recommendedName>
</protein>
<dbReference type="EC" id="2.1.1.129"/>
<dbReference type="EMBL" id="M87340">
    <property type="protein sequence ID" value="AAA33032.1"/>
    <property type="molecule type" value="mRNA"/>
</dbReference>
<dbReference type="EMBL" id="U63634">
    <property type="protein sequence ID" value="AAB05891.1"/>
    <property type="molecule type" value="Genomic_DNA"/>
</dbReference>
<dbReference type="PIR" id="S22696">
    <property type="entry name" value="S22696"/>
</dbReference>
<dbReference type="SMR" id="P45986"/>
<dbReference type="KEGG" id="ag:AAA33032"/>
<dbReference type="BioCyc" id="MetaCyc:MONOMER-16307"/>
<dbReference type="BRENDA" id="2.1.1.129">
    <property type="organism ID" value="3238"/>
</dbReference>
<dbReference type="UniPathway" id="UPA00914"/>
<dbReference type="GO" id="GO:0030787">
    <property type="term" value="F:inositol 4-methyltransferase activity"/>
    <property type="evidence" value="ECO:0007669"/>
    <property type="project" value="UniProtKB-EC"/>
</dbReference>
<dbReference type="GO" id="GO:0008171">
    <property type="term" value="F:O-methyltransferase activity"/>
    <property type="evidence" value="ECO:0007669"/>
    <property type="project" value="InterPro"/>
</dbReference>
<dbReference type="GO" id="GO:0046983">
    <property type="term" value="F:protein dimerization activity"/>
    <property type="evidence" value="ECO:0007669"/>
    <property type="project" value="InterPro"/>
</dbReference>
<dbReference type="GO" id="GO:0006020">
    <property type="term" value="P:inositol metabolic process"/>
    <property type="evidence" value="ECO:0007669"/>
    <property type="project" value="UniProtKB-UniPathway"/>
</dbReference>
<dbReference type="GO" id="GO:0032259">
    <property type="term" value="P:methylation"/>
    <property type="evidence" value="ECO:0007669"/>
    <property type="project" value="UniProtKB-KW"/>
</dbReference>
<dbReference type="FunFam" id="1.10.10.10:FF:000357">
    <property type="entry name" value="Caffeic acid 3-O-methyltransferase"/>
    <property type="match status" value="1"/>
</dbReference>
<dbReference type="FunFam" id="3.40.50.150:FF:000061">
    <property type="entry name" value="Caffeic acid O-methyltransferase"/>
    <property type="match status" value="1"/>
</dbReference>
<dbReference type="Gene3D" id="3.40.50.150">
    <property type="entry name" value="Vaccinia Virus protein VP39"/>
    <property type="match status" value="1"/>
</dbReference>
<dbReference type="Gene3D" id="1.10.10.10">
    <property type="entry name" value="Winged helix-like DNA-binding domain superfamily/Winged helix DNA-binding domain"/>
    <property type="match status" value="1"/>
</dbReference>
<dbReference type="InterPro" id="IPR016461">
    <property type="entry name" value="COMT-like"/>
</dbReference>
<dbReference type="InterPro" id="IPR001077">
    <property type="entry name" value="O_MeTrfase_dom"/>
</dbReference>
<dbReference type="InterPro" id="IPR012967">
    <property type="entry name" value="Plant_O-MeTrfase_dimerisation"/>
</dbReference>
<dbReference type="InterPro" id="IPR029063">
    <property type="entry name" value="SAM-dependent_MTases_sf"/>
</dbReference>
<dbReference type="InterPro" id="IPR036388">
    <property type="entry name" value="WH-like_DNA-bd_sf"/>
</dbReference>
<dbReference type="InterPro" id="IPR036390">
    <property type="entry name" value="WH_DNA-bd_sf"/>
</dbReference>
<dbReference type="PANTHER" id="PTHR11746">
    <property type="entry name" value="O-METHYLTRANSFERASE"/>
    <property type="match status" value="1"/>
</dbReference>
<dbReference type="Pfam" id="PF08100">
    <property type="entry name" value="Dimerisation"/>
    <property type="match status" value="1"/>
</dbReference>
<dbReference type="Pfam" id="PF00891">
    <property type="entry name" value="Methyltransf_2"/>
    <property type="match status" value="1"/>
</dbReference>
<dbReference type="PIRSF" id="PIRSF005739">
    <property type="entry name" value="O-mtase"/>
    <property type="match status" value="1"/>
</dbReference>
<dbReference type="SUPFAM" id="SSF53335">
    <property type="entry name" value="S-adenosyl-L-methionine-dependent methyltransferases"/>
    <property type="match status" value="1"/>
</dbReference>
<dbReference type="SUPFAM" id="SSF46785">
    <property type="entry name" value="Winged helix' DNA-binding domain"/>
    <property type="match status" value="1"/>
</dbReference>
<dbReference type="PROSITE" id="PS51683">
    <property type="entry name" value="SAM_OMT_II"/>
    <property type="match status" value="1"/>
</dbReference>
<keyword id="KW-0903">Direct protein sequencing</keyword>
<keyword id="KW-0489">Methyltransferase</keyword>
<keyword id="KW-0949">S-adenosyl-L-methionine</keyword>
<keyword id="KW-0346">Stress response</keyword>
<keyword id="KW-0808">Transferase</keyword>
<evidence type="ECO:0000255" key="1">
    <source>
        <dbReference type="PROSITE-ProRule" id="PRU01020"/>
    </source>
</evidence>
<sequence length="365" mass="40296">MTTYTNGNYTQPKTLDKDEQLAGLAVTLANAAAFPMILKSAFELKILDIFSKAGEGVFVSTSEIASQIGAKNPNAPVLLDRMLRLLASHSVLTCKLQKGEGGSQRVYGPAPLCNYLASNDGQGSLGPLLVLHHDKVMMESWFHLNDYILEGGVPFKRAHGMIQFDYTGTDERFNHVFNQGMAHHTILVMKKLLDNYNGFNDVKVLVDVGGNIGVNVSMIVAKHTHIKGINYDLPHVIADAPSYPGVEHVGGNMFESIPQADAIFMKWVLHDWSDEHCVKILNKCYESLAKGGKIILVESLIPVIPEDNLESHMVFSLDCHTLVHNQGGKERSKEDFEALASKTGFSTVDVICCAYDTWVMELYKK</sequence>
<name>IMT1_MESCR</name>
<accession>P45986</accession>
<comment type="function">
    <text>Catalyzes the methylation of myo-inositol into ononitol (1D-4-O-methyl myo-inositol), the first step in the biosynthesis of the cyclic sugar pinitol which has osmoprotective properties.</text>
</comment>
<comment type="catalytic activity">
    <reaction>
        <text>myo-inositol + S-adenosyl-L-methionine = 1D-4-O-methyl-myo-inositol + S-adenosyl-L-homocysteine + H(+)</text>
        <dbReference type="Rhea" id="RHEA:23248"/>
        <dbReference type="ChEBI" id="CHEBI:15378"/>
        <dbReference type="ChEBI" id="CHEBI:17268"/>
        <dbReference type="ChEBI" id="CHEBI:18266"/>
        <dbReference type="ChEBI" id="CHEBI:57856"/>
        <dbReference type="ChEBI" id="CHEBI:59789"/>
        <dbReference type="EC" id="2.1.1.129"/>
    </reaction>
</comment>
<comment type="pathway">
    <text>Polyol metabolism; myo-inositol metabolism.</text>
</comment>
<comment type="tissue specificity">
    <text>Leaves and roots. The levels found in the leaves are 25 times greater than in the roots.</text>
</comment>
<comment type="induction">
    <text>By salt (osmotic) stress.</text>
</comment>
<comment type="similarity">
    <text evidence="1">Belongs to the class I-like SAM-binding methyltransferase superfamily. Cation-independent O-methyltransferase family.</text>
</comment>
<organism>
    <name type="scientific">Mesembryanthemum crystallinum</name>
    <name type="common">Common ice plant</name>
    <name type="synonym">Cryophytum crystallinum</name>
    <dbReference type="NCBI Taxonomy" id="3544"/>
    <lineage>
        <taxon>Eukaryota</taxon>
        <taxon>Viridiplantae</taxon>
        <taxon>Streptophyta</taxon>
        <taxon>Embryophyta</taxon>
        <taxon>Tracheophyta</taxon>
        <taxon>Spermatophyta</taxon>
        <taxon>Magnoliopsida</taxon>
        <taxon>eudicotyledons</taxon>
        <taxon>Gunneridae</taxon>
        <taxon>Pentapetalae</taxon>
        <taxon>Caryophyllales</taxon>
        <taxon>Aizoaceae</taxon>
        <taxon>Mesembryanthemum</taxon>
        <taxon>Mesembryanthemum subgen. Cryophytum</taxon>
    </lineage>
</organism>
<feature type="chain" id="PRO_0000084188" description="Inositol 4-methyltransferase">
    <location>
        <begin position="1"/>
        <end position="365"/>
    </location>
</feature>
<feature type="active site" description="Proton acceptor" evidence="1">
    <location>
        <position position="270"/>
    </location>
</feature>
<feature type="binding site" evidence="1">
    <location>
        <position position="232"/>
    </location>
    <ligand>
        <name>S-adenosyl-L-methionine</name>
        <dbReference type="ChEBI" id="CHEBI:59789"/>
    </ligand>
</feature>
<proteinExistence type="evidence at protein level"/>
<gene>
    <name type="primary">IMT1</name>
</gene>
<reference key="1">
    <citation type="journal article" date="1992" name="EMBO J.">
        <title>A novel methyl transferase induced by osmotic stress in the facultative halophyte Mesembryanthemum crystallinum.</title>
        <authorList>
            <person name="Vernon D.M."/>
            <person name="Bohnert H.J."/>
        </authorList>
    </citation>
    <scope>NUCLEOTIDE SEQUENCE [MRNA]</scope>
    <source>
        <tissue>Leaf</tissue>
    </source>
</reference>
<reference key="2">
    <citation type="journal article" date="1999" name="Plant Physiol.">
        <title>Myo-inositol-dependent sodium uptake in ice plant.</title>
        <authorList>
            <person name="Nelson D.E."/>
            <person name="Koukoumanos M."/>
            <person name="Bohnert H.J."/>
        </authorList>
    </citation>
    <scope>NUCLEOTIDE SEQUENCE</scope>
</reference>
<reference key="3">
    <citation type="journal article" date="1995" name="Arch. Biochem. Biophys.">
        <title>Characterization of IMT1, myo-inositol O-methyltransferase, from Mesembryanthemum crystallinum.</title>
        <authorList>
            <person name="Rammesmayer G."/>
            <person name="Pichorner H."/>
            <person name="Adams P."/>
            <person name="Jensen R.G."/>
            <person name="Bohnert H.J."/>
        </authorList>
    </citation>
    <scope>PROTEIN SEQUENCE OF N-TERMINUS</scope>
</reference>